<feature type="chain" id="PRO_1000031160" description="Ribonuclease HII">
    <location>
        <begin position="1"/>
        <end position="191"/>
    </location>
</feature>
<feature type="domain" description="RNase H type-2" evidence="2">
    <location>
        <begin position="7"/>
        <end position="191"/>
    </location>
</feature>
<feature type="binding site" evidence="1">
    <location>
        <position position="13"/>
    </location>
    <ligand>
        <name>a divalent metal cation</name>
        <dbReference type="ChEBI" id="CHEBI:60240"/>
    </ligand>
</feature>
<feature type="binding site" evidence="1">
    <location>
        <position position="14"/>
    </location>
    <ligand>
        <name>a divalent metal cation</name>
        <dbReference type="ChEBI" id="CHEBI:60240"/>
    </ligand>
</feature>
<feature type="binding site" evidence="1">
    <location>
        <position position="103"/>
    </location>
    <ligand>
        <name>a divalent metal cation</name>
        <dbReference type="ChEBI" id="CHEBI:60240"/>
    </ligand>
</feature>
<evidence type="ECO:0000255" key="1">
    <source>
        <dbReference type="HAMAP-Rule" id="MF_00052"/>
    </source>
</evidence>
<evidence type="ECO:0000255" key="2">
    <source>
        <dbReference type="PROSITE-ProRule" id="PRU01319"/>
    </source>
</evidence>
<comment type="function">
    <text evidence="1">Endonuclease that specifically degrades the RNA of RNA-DNA hybrids.</text>
</comment>
<comment type="catalytic activity">
    <reaction evidence="1">
        <text>Endonucleolytic cleavage to 5'-phosphomonoester.</text>
        <dbReference type="EC" id="3.1.26.4"/>
    </reaction>
</comment>
<comment type="cofactor">
    <cofactor evidence="1">
        <name>Mn(2+)</name>
        <dbReference type="ChEBI" id="CHEBI:29035"/>
    </cofactor>
    <cofactor evidence="1">
        <name>Mg(2+)</name>
        <dbReference type="ChEBI" id="CHEBI:18420"/>
    </cofactor>
    <text evidence="1">Manganese or magnesium. Binds 1 divalent metal ion per monomer in the absence of substrate. May bind a second metal ion after substrate binding.</text>
</comment>
<comment type="subcellular location">
    <subcellularLocation>
        <location evidence="1">Cytoplasm</location>
    </subcellularLocation>
</comment>
<comment type="similarity">
    <text evidence="1">Belongs to the RNase HII family.</text>
</comment>
<organism>
    <name type="scientific">Legionella pneumophila subsp. pneumophila (strain Philadelphia 1 / ATCC 33152 / DSM 7513)</name>
    <dbReference type="NCBI Taxonomy" id="272624"/>
    <lineage>
        <taxon>Bacteria</taxon>
        <taxon>Pseudomonadati</taxon>
        <taxon>Pseudomonadota</taxon>
        <taxon>Gammaproteobacteria</taxon>
        <taxon>Legionellales</taxon>
        <taxon>Legionellaceae</taxon>
        <taxon>Legionella</taxon>
    </lineage>
</organism>
<gene>
    <name evidence="1" type="primary">rnhB</name>
    <name type="ordered locus">lpg1373</name>
</gene>
<sequence>MNTVLKILMAGVDEVGRGPLAGAVVTAAVILKKPIDGLTDSKKLSPKQRNLLAIRIKEEALAFAYGRAEVEEIDQLNIHHATLLAMRRAVEALPIQPDNVFVDGAFTPQLNIPCKAIVQGDSLIPEISAASILAKVLRDEEMVALDKIYPGYGFAEHKGYATPVHKEALMRLGPCKIHRRSYSPVADLISK</sequence>
<reference key="1">
    <citation type="journal article" date="2004" name="Science">
        <title>The genomic sequence of the accidental pathogen Legionella pneumophila.</title>
        <authorList>
            <person name="Chien M."/>
            <person name="Morozova I."/>
            <person name="Shi S."/>
            <person name="Sheng H."/>
            <person name="Chen J."/>
            <person name="Gomez S.M."/>
            <person name="Asamani G."/>
            <person name="Hill K."/>
            <person name="Nuara J."/>
            <person name="Feder M."/>
            <person name="Rineer J."/>
            <person name="Greenberg J.J."/>
            <person name="Steshenko V."/>
            <person name="Park S.H."/>
            <person name="Zhao B."/>
            <person name="Teplitskaya E."/>
            <person name="Edwards J.R."/>
            <person name="Pampou S."/>
            <person name="Georghiou A."/>
            <person name="Chou I.-C."/>
            <person name="Iannuccilli W."/>
            <person name="Ulz M.E."/>
            <person name="Kim D.H."/>
            <person name="Geringer-Sameth A."/>
            <person name="Goldsberry C."/>
            <person name="Morozov P."/>
            <person name="Fischer S.G."/>
            <person name="Segal G."/>
            <person name="Qu X."/>
            <person name="Rzhetsky A."/>
            <person name="Zhang P."/>
            <person name="Cayanis E."/>
            <person name="De Jong P.J."/>
            <person name="Ju J."/>
            <person name="Kalachikov S."/>
            <person name="Shuman H.A."/>
            <person name="Russo J.J."/>
        </authorList>
    </citation>
    <scope>NUCLEOTIDE SEQUENCE [LARGE SCALE GENOMIC DNA]</scope>
    <source>
        <strain>Philadelphia 1 / ATCC 33152 / DSM 7513</strain>
    </source>
</reference>
<dbReference type="EC" id="3.1.26.4" evidence="1"/>
<dbReference type="EMBL" id="AE017354">
    <property type="protein sequence ID" value="AAU27455.1"/>
    <property type="molecule type" value="Genomic_DNA"/>
</dbReference>
<dbReference type="RefSeq" id="WP_010947103.1">
    <property type="nucleotide sequence ID" value="NC_002942.5"/>
</dbReference>
<dbReference type="RefSeq" id="YP_095402.1">
    <property type="nucleotide sequence ID" value="NC_002942.5"/>
</dbReference>
<dbReference type="SMR" id="Q5ZVR7"/>
<dbReference type="STRING" id="272624.lpg1373"/>
<dbReference type="PaxDb" id="272624-lpg1373"/>
<dbReference type="GeneID" id="57035363"/>
<dbReference type="KEGG" id="lpn:lpg1373"/>
<dbReference type="PATRIC" id="fig|272624.6.peg.1443"/>
<dbReference type="eggNOG" id="COG0164">
    <property type="taxonomic scope" value="Bacteria"/>
</dbReference>
<dbReference type="HOGENOM" id="CLU_036532_3_2_6"/>
<dbReference type="OrthoDB" id="9803420at2"/>
<dbReference type="Proteomes" id="UP000000609">
    <property type="component" value="Chromosome"/>
</dbReference>
<dbReference type="GO" id="GO:0005737">
    <property type="term" value="C:cytoplasm"/>
    <property type="evidence" value="ECO:0007669"/>
    <property type="project" value="UniProtKB-SubCell"/>
</dbReference>
<dbReference type="GO" id="GO:0032299">
    <property type="term" value="C:ribonuclease H2 complex"/>
    <property type="evidence" value="ECO:0007669"/>
    <property type="project" value="TreeGrafter"/>
</dbReference>
<dbReference type="GO" id="GO:0030145">
    <property type="term" value="F:manganese ion binding"/>
    <property type="evidence" value="ECO:0007669"/>
    <property type="project" value="UniProtKB-UniRule"/>
</dbReference>
<dbReference type="GO" id="GO:0003723">
    <property type="term" value="F:RNA binding"/>
    <property type="evidence" value="ECO:0007669"/>
    <property type="project" value="InterPro"/>
</dbReference>
<dbReference type="GO" id="GO:0004523">
    <property type="term" value="F:RNA-DNA hybrid ribonuclease activity"/>
    <property type="evidence" value="ECO:0007669"/>
    <property type="project" value="UniProtKB-UniRule"/>
</dbReference>
<dbReference type="GO" id="GO:0043137">
    <property type="term" value="P:DNA replication, removal of RNA primer"/>
    <property type="evidence" value="ECO:0007669"/>
    <property type="project" value="TreeGrafter"/>
</dbReference>
<dbReference type="GO" id="GO:0006298">
    <property type="term" value="P:mismatch repair"/>
    <property type="evidence" value="ECO:0007669"/>
    <property type="project" value="TreeGrafter"/>
</dbReference>
<dbReference type="CDD" id="cd07182">
    <property type="entry name" value="RNase_HII_bacteria_HII_like"/>
    <property type="match status" value="1"/>
</dbReference>
<dbReference type="FunFam" id="3.30.420.10:FF:000006">
    <property type="entry name" value="Ribonuclease HII"/>
    <property type="match status" value="1"/>
</dbReference>
<dbReference type="Gene3D" id="3.30.420.10">
    <property type="entry name" value="Ribonuclease H-like superfamily/Ribonuclease H"/>
    <property type="match status" value="1"/>
</dbReference>
<dbReference type="HAMAP" id="MF_00052_B">
    <property type="entry name" value="RNase_HII_B"/>
    <property type="match status" value="1"/>
</dbReference>
<dbReference type="InterPro" id="IPR022898">
    <property type="entry name" value="RNase_HII"/>
</dbReference>
<dbReference type="InterPro" id="IPR001352">
    <property type="entry name" value="RNase_HII/HIII"/>
</dbReference>
<dbReference type="InterPro" id="IPR024567">
    <property type="entry name" value="RNase_HII/HIII_dom"/>
</dbReference>
<dbReference type="InterPro" id="IPR012337">
    <property type="entry name" value="RNaseH-like_sf"/>
</dbReference>
<dbReference type="InterPro" id="IPR036397">
    <property type="entry name" value="RNaseH_sf"/>
</dbReference>
<dbReference type="NCBIfam" id="NF000595">
    <property type="entry name" value="PRK00015.1-3"/>
    <property type="match status" value="1"/>
</dbReference>
<dbReference type="NCBIfam" id="NF000596">
    <property type="entry name" value="PRK00015.1-4"/>
    <property type="match status" value="1"/>
</dbReference>
<dbReference type="PANTHER" id="PTHR10954">
    <property type="entry name" value="RIBONUCLEASE H2 SUBUNIT A"/>
    <property type="match status" value="1"/>
</dbReference>
<dbReference type="PANTHER" id="PTHR10954:SF18">
    <property type="entry name" value="RIBONUCLEASE HII"/>
    <property type="match status" value="1"/>
</dbReference>
<dbReference type="Pfam" id="PF01351">
    <property type="entry name" value="RNase_HII"/>
    <property type="match status" value="1"/>
</dbReference>
<dbReference type="SUPFAM" id="SSF53098">
    <property type="entry name" value="Ribonuclease H-like"/>
    <property type="match status" value="1"/>
</dbReference>
<dbReference type="PROSITE" id="PS51975">
    <property type="entry name" value="RNASE_H_2"/>
    <property type="match status" value="1"/>
</dbReference>
<protein>
    <recommendedName>
        <fullName evidence="1">Ribonuclease HII</fullName>
        <shortName evidence="1">RNase HII</shortName>
        <ecNumber evidence="1">3.1.26.4</ecNumber>
    </recommendedName>
</protein>
<keyword id="KW-0963">Cytoplasm</keyword>
<keyword id="KW-0255">Endonuclease</keyword>
<keyword id="KW-0378">Hydrolase</keyword>
<keyword id="KW-0464">Manganese</keyword>
<keyword id="KW-0479">Metal-binding</keyword>
<keyword id="KW-0540">Nuclease</keyword>
<keyword id="KW-1185">Reference proteome</keyword>
<accession>Q5ZVR7</accession>
<name>RNH2_LEGPH</name>
<proteinExistence type="inferred from homology"/>